<comment type="similarity">
    <text evidence="1">Belongs to the UPF0340 family.</text>
</comment>
<evidence type="ECO:0000255" key="1">
    <source>
        <dbReference type="HAMAP-Rule" id="MF_00800"/>
    </source>
</evidence>
<feature type="chain" id="PRO_0000213024" description="UPF0340 protein spyM18_1963">
    <location>
        <begin position="1"/>
        <end position="186"/>
    </location>
</feature>
<reference key="1">
    <citation type="journal article" date="2002" name="Proc. Natl. Acad. Sci. U.S.A.">
        <title>Genome sequence and comparative microarray analysis of serotype M18 group A Streptococcus strains associated with acute rheumatic fever outbreaks.</title>
        <authorList>
            <person name="Smoot J.C."/>
            <person name="Barbian K.D."/>
            <person name="Van Gompel J.J."/>
            <person name="Smoot L.M."/>
            <person name="Chaussee M.S."/>
            <person name="Sylva G.L."/>
            <person name="Sturdevant D.E."/>
            <person name="Ricklefs S.M."/>
            <person name="Porcella S.F."/>
            <person name="Parkins L.D."/>
            <person name="Beres S.B."/>
            <person name="Campbell D.S."/>
            <person name="Smith T.M."/>
            <person name="Zhang Q."/>
            <person name="Kapur V."/>
            <person name="Daly J.A."/>
            <person name="Veasy L.G."/>
            <person name="Musser J.M."/>
        </authorList>
    </citation>
    <scope>NUCLEOTIDE SEQUENCE [LARGE SCALE GENOMIC DNA]</scope>
    <source>
        <strain>MGAS8232</strain>
    </source>
</reference>
<organism>
    <name type="scientific">Streptococcus pyogenes serotype M18 (strain MGAS8232)</name>
    <dbReference type="NCBI Taxonomy" id="186103"/>
    <lineage>
        <taxon>Bacteria</taxon>
        <taxon>Bacillati</taxon>
        <taxon>Bacillota</taxon>
        <taxon>Bacilli</taxon>
        <taxon>Lactobacillales</taxon>
        <taxon>Streptococcaceae</taxon>
        <taxon>Streptococcus</taxon>
    </lineage>
</organism>
<gene>
    <name type="ordered locus">spyM18_1963</name>
</gene>
<protein>
    <recommendedName>
        <fullName evidence="1">UPF0340 protein spyM18_1963</fullName>
    </recommendedName>
</protein>
<accession>Q7CMS5</accession>
<name>Y1963_STRP8</name>
<sequence>MLNNLEKQTREIVIDVVERSAIQPGNLFVLGLSSSEILGSRIGKQSSLEVGQIVVEVVLDELNKRGVHLAVQGCEHVNRALVVERHVAESKQLEIVNVVPNLHAGGSAQMAAFQLMSDPVEVEEVIAHAGLDIGDTAIGMHIKRVQIPLIPCQRELGGAHVTALASRPKLIGGARADYNMDIIRKS</sequence>
<proteinExistence type="inferred from homology"/>
<dbReference type="EMBL" id="AE009949">
    <property type="protein sequence ID" value="AAL98454.1"/>
    <property type="molecule type" value="Genomic_DNA"/>
</dbReference>
<dbReference type="RefSeq" id="WP_002995157.1">
    <property type="nucleotide sequence ID" value="NC_003485.1"/>
</dbReference>
<dbReference type="SMR" id="Q7CMS5"/>
<dbReference type="KEGG" id="spm:spyM18_1963"/>
<dbReference type="HOGENOM" id="CLU_106658_0_0_9"/>
<dbReference type="Gene3D" id="3.40.50.10360">
    <property type="entry name" value="Hypothetical protein TT1679"/>
    <property type="match status" value="1"/>
</dbReference>
<dbReference type="HAMAP" id="MF_00800">
    <property type="entry name" value="UPF0340"/>
    <property type="match status" value="1"/>
</dbReference>
<dbReference type="InterPro" id="IPR028345">
    <property type="entry name" value="Antibiotic_NAT-like"/>
</dbReference>
<dbReference type="InterPro" id="IPR006340">
    <property type="entry name" value="DUF436"/>
</dbReference>
<dbReference type="NCBIfam" id="TIGR01440">
    <property type="entry name" value="TIGR01440 family protein"/>
    <property type="match status" value="1"/>
</dbReference>
<dbReference type="Pfam" id="PF04260">
    <property type="entry name" value="DUF436"/>
    <property type="match status" value="1"/>
</dbReference>
<dbReference type="PIRSF" id="PIRSF007510">
    <property type="entry name" value="UCP007510"/>
    <property type="match status" value="1"/>
</dbReference>
<dbReference type="SUPFAM" id="SSF110710">
    <property type="entry name" value="TTHA0583/YokD-like"/>
    <property type="match status" value="1"/>
</dbReference>